<gene>
    <name type="primary">mettl2</name>
</gene>
<comment type="function">
    <text evidence="3">S-adenosyl-L-methionine-dependent methyltransferase that mediates N(3)-methylcytidine modification of residue 32 of the tRNA anticodon loop of tRNA(Thr)(UGU) and tRNA(Arg)(CCU). N(3)-methylcytidine methylation by mettl2 requires the N6-threonylcarbamoylation of tRNA (t6A37) by the EKC/KEOPS complex as prerequisite.</text>
</comment>
<comment type="catalytic activity">
    <reaction evidence="1">
        <text>cytidine(32) in tRNA(Thr) + S-adenosyl-L-methionine = N(3)-methylcytidine(32) in tRNA(Thr) + S-adenosyl-L-homocysteine + H(+)</text>
        <dbReference type="Rhea" id="RHEA:50960"/>
        <dbReference type="Rhea" id="RHEA-COMP:12850"/>
        <dbReference type="Rhea" id="RHEA-COMP:12852"/>
        <dbReference type="ChEBI" id="CHEBI:15378"/>
        <dbReference type="ChEBI" id="CHEBI:57856"/>
        <dbReference type="ChEBI" id="CHEBI:59789"/>
        <dbReference type="ChEBI" id="CHEBI:74894"/>
        <dbReference type="ChEBI" id="CHEBI:82748"/>
    </reaction>
    <physiologicalReaction direction="left-to-right" evidence="1">
        <dbReference type="Rhea" id="RHEA:50961"/>
    </physiologicalReaction>
</comment>
<comment type="catalytic activity">
    <reaction evidence="1">
        <text>cytidine(32) in tRNA(Arg)(CCU) + S-adenosyl-L-methionine = N(3)-methylcytidine(32) in tRNA(Arg)(CCU) + S-adenosyl-L-homocysteine + H(+)</text>
        <dbReference type="Rhea" id="RHEA:60912"/>
        <dbReference type="Rhea" id="RHEA-COMP:15710"/>
        <dbReference type="Rhea" id="RHEA-COMP:15712"/>
        <dbReference type="ChEBI" id="CHEBI:15378"/>
        <dbReference type="ChEBI" id="CHEBI:57856"/>
        <dbReference type="ChEBI" id="CHEBI:59789"/>
        <dbReference type="ChEBI" id="CHEBI:74894"/>
        <dbReference type="ChEBI" id="CHEBI:82748"/>
    </reaction>
    <physiologicalReaction direction="left-to-right" evidence="1">
        <dbReference type="Rhea" id="RHEA:60913"/>
    </physiologicalReaction>
</comment>
<comment type="subunit">
    <text evidence="3">Monomer.</text>
</comment>
<comment type="subcellular location">
    <subcellularLocation>
        <location evidence="3">Cytoplasm</location>
    </subcellularLocation>
</comment>
<comment type="similarity">
    <text evidence="4">Belongs to the methyltransferase superfamily. METL family.</text>
</comment>
<name>METL2_XENTR</name>
<keyword id="KW-0963">Cytoplasm</keyword>
<keyword id="KW-0489">Methyltransferase</keyword>
<keyword id="KW-1185">Reference proteome</keyword>
<keyword id="KW-0949">S-adenosyl-L-methionine</keyword>
<keyword id="KW-0808">Transferase</keyword>
<keyword id="KW-0819">tRNA processing</keyword>
<reference key="1">
    <citation type="submission" date="2004-12" db="EMBL/GenBank/DDBJ databases">
        <authorList>
            <consortium name="NIH - Xenopus Gene Collection (XGC) project"/>
        </authorList>
    </citation>
    <scope>NUCLEOTIDE SEQUENCE [LARGE SCALE MRNA]</scope>
</reference>
<organism>
    <name type="scientific">Xenopus tropicalis</name>
    <name type="common">Western clawed frog</name>
    <name type="synonym">Silurana tropicalis</name>
    <dbReference type="NCBI Taxonomy" id="8364"/>
    <lineage>
        <taxon>Eukaryota</taxon>
        <taxon>Metazoa</taxon>
        <taxon>Chordata</taxon>
        <taxon>Craniata</taxon>
        <taxon>Vertebrata</taxon>
        <taxon>Euteleostomi</taxon>
        <taxon>Amphibia</taxon>
        <taxon>Batrachia</taxon>
        <taxon>Anura</taxon>
        <taxon>Pipoidea</taxon>
        <taxon>Pipidae</taxon>
        <taxon>Xenopodinae</taxon>
        <taxon>Xenopus</taxon>
        <taxon>Silurana</taxon>
    </lineage>
</organism>
<accession>Q5M8E6</accession>
<sequence>MEGKRPQFGNRHLDDPSRVFQHNAWDNVQWSEEQESAAHKKVQENSVQPLPLEKQEEYENKASNFWDDFYTIHENRFFKDRHWLFTEFPELSSRSSTQTGTESQEGQVMQLNGCQEETERADVENPFPGASATYRIMEVGCGVGNTVFPILQNNTDPGLFVYCCDFSSTAVELVKSNELYSPSRCFAFVHDVSDEQSSFPMPEHSLDVIVLIFVLSAINPAKMQNVISRLSSLLKPGGCILLRDYGRYDMAQLRFKKGRCLAENFYVRGDGTRVYFFTQDDLDTLFISAGLQKVQNTVDRRLQVNRGKQLTMYRVWIQCKYVKPQETELQNGGCSSE</sequence>
<dbReference type="EC" id="2.1.1.-" evidence="1"/>
<dbReference type="EMBL" id="BC088068">
    <property type="protein sequence ID" value="AAH88068.1"/>
    <property type="molecule type" value="mRNA"/>
</dbReference>
<dbReference type="RefSeq" id="NP_001011322.1">
    <property type="nucleotide sequence ID" value="NM_001011322.1"/>
</dbReference>
<dbReference type="SMR" id="Q5M8E6"/>
<dbReference type="FunCoup" id="Q5M8E6">
    <property type="interactions" value="2468"/>
</dbReference>
<dbReference type="STRING" id="8364.ENSXETP00000047406"/>
<dbReference type="PaxDb" id="8364-ENSXETP00000017172"/>
<dbReference type="DNASU" id="496782"/>
<dbReference type="GeneID" id="496782"/>
<dbReference type="KEGG" id="xtr:496782"/>
<dbReference type="AGR" id="Xenbase:XB-GENE-947877"/>
<dbReference type="CTD" id="55798"/>
<dbReference type="eggNOG" id="KOG2361">
    <property type="taxonomic scope" value="Eukaryota"/>
</dbReference>
<dbReference type="HOGENOM" id="CLU_029724_0_2_1"/>
<dbReference type="InParanoid" id="Q5M8E6"/>
<dbReference type="OMA" id="PAKYWDI"/>
<dbReference type="OrthoDB" id="417697at2759"/>
<dbReference type="PhylomeDB" id="Q5M8E6"/>
<dbReference type="Proteomes" id="UP000008143">
    <property type="component" value="Chromosome 10"/>
</dbReference>
<dbReference type="GO" id="GO:0005737">
    <property type="term" value="C:cytoplasm"/>
    <property type="evidence" value="ECO:0000250"/>
    <property type="project" value="UniProtKB"/>
</dbReference>
<dbReference type="GO" id="GO:0016427">
    <property type="term" value="F:tRNA (cytidine) methyltransferase activity"/>
    <property type="evidence" value="ECO:0000250"/>
    <property type="project" value="UniProtKB"/>
</dbReference>
<dbReference type="GO" id="GO:0030488">
    <property type="term" value="P:tRNA methylation"/>
    <property type="evidence" value="ECO:0000250"/>
    <property type="project" value="UniProtKB"/>
</dbReference>
<dbReference type="CDD" id="cd02440">
    <property type="entry name" value="AdoMet_MTases"/>
    <property type="match status" value="1"/>
</dbReference>
<dbReference type="FunFam" id="3.40.50.150:FF:000145">
    <property type="entry name" value="Methyltransferase-like protein"/>
    <property type="match status" value="1"/>
</dbReference>
<dbReference type="Gene3D" id="3.40.50.150">
    <property type="entry name" value="Vaccinia Virus protein VP39"/>
    <property type="match status" value="1"/>
</dbReference>
<dbReference type="InterPro" id="IPR013217">
    <property type="entry name" value="Methyltransf_12"/>
</dbReference>
<dbReference type="InterPro" id="IPR026113">
    <property type="entry name" value="METTL2/6/8-like"/>
</dbReference>
<dbReference type="InterPro" id="IPR029063">
    <property type="entry name" value="SAM-dependent_MTases_sf"/>
</dbReference>
<dbReference type="PANTHER" id="PTHR22809">
    <property type="entry name" value="METHYLTRANSFERASE-RELATED"/>
    <property type="match status" value="1"/>
</dbReference>
<dbReference type="PANTHER" id="PTHR22809:SF4">
    <property type="entry name" value="TRNA N(3)-METHYLCYTIDINE METHYLTRANSFERASE METTL2A-RELATED"/>
    <property type="match status" value="1"/>
</dbReference>
<dbReference type="Pfam" id="PF08242">
    <property type="entry name" value="Methyltransf_12"/>
    <property type="match status" value="1"/>
</dbReference>
<dbReference type="PIRSF" id="PIRSF037755">
    <property type="entry name" value="Mettl2_prd"/>
    <property type="match status" value="1"/>
</dbReference>
<dbReference type="SUPFAM" id="SSF53335">
    <property type="entry name" value="S-adenosyl-L-methionine-dependent methyltransferases"/>
    <property type="match status" value="1"/>
</dbReference>
<proteinExistence type="evidence at transcript level"/>
<feature type="chain" id="PRO_0000328850" description="tRNA N(3)-cytidine methyltransferase METTL2">
    <location>
        <begin position="1"/>
        <end position="337"/>
    </location>
</feature>
<feature type="binding site" evidence="2">
    <location>
        <position position="66"/>
    </location>
    <ligand>
        <name>S-adenosyl-L-methionine</name>
        <dbReference type="ChEBI" id="CHEBI:59789"/>
    </ligand>
</feature>
<feature type="binding site" evidence="2">
    <location>
        <position position="70"/>
    </location>
    <ligand>
        <name>S-adenosyl-L-methionine</name>
        <dbReference type="ChEBI" id="CHEBI:59789"/>
    </ligand>
</feature>
<feature type="binding site" evidence="2">
    <location>
        <position position="140"/>
    </location>
    <ligand>
        <name>S-adenosyl-L-methionine</name>
        <dbReference type="ChEBI" id="CHEBI:59789"/>
    </ligand>
</feature>
<feature type="binding site" evidence="2">
    <location>
        <position position="165"/>
    </location>
    <ligand>
        <name>S-adenosyl-L-methionine</name>
        <dbReference type="ChEBI" id="CHEBI:59789"/>
    </ligand>
</feature>
<feature type="binding site" evidence="2">
    <location>
        <position position="191"/>
    </location>
    <ligand>
        <name>S-adenosyl-L-methionine</name>
        <dbReference type="ChEBI" id="CHEBI:59789"/>
    </ligand>
</feature>
<feature type="binding site" evidence="2">
    <location>
        <position position="212"/>
    </location>
    <ligand>
        <name>S-adenosyl-L-methionine</name>
        <dbReference type="ChEBI" id="CHEBI:59789"/>
    </ligand>
</feature>
<protein>
    <recommendedName>
        <fullName evidence="4">tRNA N(3)-cytidine methyltransferase METTL2</fullName>
        <ecNumber evidence="1">2.1.1.-</ecNumber>
    </recommendedName>
    <alternativeName>
        <fullName>Methyltransferase-like protein 2</fullName>
    </alternativeName>
</protein>
<evidence type="ECO:0000250" key="1">
    <source>
        <dbReference type="UniProtKB" id="Q8BMK1"/>
    </source>
</evidence>
<evidence type="ECO:0000250" key="2">
    <source>
        <dbReference type="UniProtKB" id="Q8TCB7"/>
    </source>
</evidence>
<evidence type="ECO:0000250" key="3">
    <source>
        <dbReference type="UniProtKB" id="Q96IZ6"/>
    </source>
</evidence>
<evidence type="ECO:0000305" key="4"/>